<feature type="chain" id="PRO_0000121770" description="Replication factor C subunit 4">
    <location>
        <begin position="1"/>
        <end position="342"/>
    </location>
</feature>
<feature type="binding site" evidence="1">
    <location>
        <position position="24"/>
    </location>
    <ligand>
        <name>ATP</name>
        <dbReference type="ChEBI" id="CHEBI:30616"/>
    </ligand>
</feature>
<feature type="binding site" evidence="1">
    <location>
        <position position="36"/>
    </location>
    <ligand>
        <name>ATP</name>
        <dbReference type="ChEBI" id="CHEBI:30616"/>
    </ligand>
</feature>
<feature type="binding site" evidence="2">
    <location>
        <begin position="61"/>
        <end position="68"/>
    </location>
    <ligand>
        <name>ATP</name>
        <dbReference type="ChEBI" id="CHEBI:30616"/>
    </ligand>
</feature>
<feature type="binding site" evidence="1">
    <location>
        <position position="157"/>
    </location>
    <ligand>
        <name>ATP</name>
        <dbReference type="ChEBI" id="CHEBI:30616"/>
    </ligand>
</feature>
<feature type="binding site" evidence="1">
    <location>
        <position position="215"/>
    </location>
    <ligand>
        <name>ATP</name>
        <dbReference type="ChEBI" id="CHEBI:30616"/>
    </ligand>
</feature>
<sequence length="342" mass="37655">MSNAVSSSVFGEKNNSVAYELPWVEKYRPIVLDDIVGNEETIDRLKVIAKEGNMPHLVISGMPGIGKTTSILCLAHALLGPAYKEGVLELNASDERGIDVVRNRIKAFAQKKVILPPGRHKIIILDEADSMTAGAQQALRRTMEIYSNTTRFALACNQSNKIIEPIQSRCAILRYSRLTDQQVLQRLLNICKAEKVNYTDDGLAALIMTAEGDMRQAVNNLQSTVAGFGLVNGENVFRVADQPSPVAIHAMLTACQSGNIDVALEKLQGIWDLGFSAVDIVTNMFRVVKTMDSIPEFSRLEMLKEIGQTHMIILEGVQTLLQLSGLVCRLAKSQMKPESFII</sequence>
<organism>
    <name type="scientific">Schizosaccharomyces pombe (strain 972 / ATCC 24843)</name>
    <name type="common">Fission yeast</name>
    <dbReference type="NCBI Taxonomy" id="284812"/>
    <lineage>
        <taxon>Eukaryota</taxon>
        <taxon>Fungi</taxon>
        <taxon>Dikarya</taxon>
        <taxon>Ascomycota</taxon>
        <taxon>Taphrinomycotina</taxon>
        <taxon>Schizosaccharomycetes</taxon>
        <taxon>Schizosaccharomycetales</taxon>
        <taxon>Schizosaccharomycetaceae</taxon>
        <taxon>Schizosaccharomyces</taxon>
    </lineage>
</organism>
<dbReference type="EMBL" id="CU329670">
    <property type="protein sequence ID" value="CAA22597.1"/>
    <property type="molecule type" value="Genomic_DNA"/>
</dbReference>
<dbReference type="PIR" id="T37746">
    <property type="entry name" value="T37746"/>
</dbReference>
<dbReference type="RefSeq" id="NP_593121.1">
    <property type="nucleotide sequence ID" value="NM_001018517.2"/>
</dbReference>
<dbReference type="SMR" id="O94449"/>
<dbReference type="BioGRID" id="279239">
    <property type="interactions" value="7"/>
</dbReference>
<dbReference type="ComplexPortal" id="CPX-546">
    <property type="entry name" value="DNA replication factor C complex"/>
</dbReference>
<dbReference type="FunCoup" id="O94449">
    <property type="interactions" value="439"/>
</dbReference>
<dbReference type="STRING" id="284812.O94449"/>
<dbReference type="iPTMnet" id="O94449"/>
<dbReference type="PaxDb" id="4896-SPAC1687.03c.1"/>
<dbReference type="EnsemblFungi" id="SPAC1687.03c.1">
    <property type="protein sequence ID" value="SPAC1687.03c.1:pep"/>
    <property type="gene ID" value="SPAC1687.03c"/>
</dbReference>
<dbReference type="GeneID" id="2542790"/>
<dbReference type="KEGG" id="spo:2542790"/>
<dbReference type="PomBase" id="SPAC1687.03c">
    <property type="gene designation" value="rfc4"/>
</dbReference>
<dbReference type="VEuPathDB" id="FungiDB:SPAC1687.03c"/>
<dbReference type="eggNOG" id="KOG0991">
    <property type="taxonomic scope" value="Eukaryota"/>
</dbReference>
<dbReference type="HOGENOM" id="CLU_042324_0_1_1"/>
<dbReference type="InParanoid" id="O94449"/>
<dbReference type="OMA" id="SCNYSSQ"/>
<dbReference type="PhylomeDB" id="O94449"/>
<dbReference type="Reactome" id="R-SPO-110312">
    <property type="pathway name" value="Translesion synthesis by REV1"/>
</dbReference>
<dbReference type="Reactome" id="R-SPO-110314">
    <property type="pathway name" value="Recognition of DNA damage by PCNA-containing replication complex"/>
</dbReference>
<dbReference type="Reactome" id="R-SPO-110320">
    <property type="pathway name" value="Translesion Synthesis by POLH"/>
</dbReference>
<dbReference type="Reactome" id="R-SPO-176187">
    <property type="pathway name" value="Activation of ATR in response to replication stress"/>
</dbReference>
<dbReference type="Reactome" id="R-SPO-5651801">
    <property type="pathway name" value="PCNA-Dependent Long Patch Base Excision Repair"/>
</dbReference>
<dbReference type="Reactome" id="R-SPO-5655862">
    <property type="pathway name" value="Translesion synthesis by POLK"/>
</dbReference>
<dbReference type="Reactome" id="R-SPO-5656121">
    <property type="pathway name" value="Translesion synthesis by POLI"/>
</dbReference>
<dbReference type="Reactome" id="R-SPO-5656169">
    <property type="pathway name" value="Termination of translesion DNA synthesis"/>
</dbReference>
<dbReference type="Reactome" id="R-SPO-5696397">
    <property type="pathway name" value="Gap-filling DNA repair synthesis and ligation in GG-NER"/>
</dbReference>
<dbReference type="Reactome" id="R-SPO-5696400">
    <property type="pathway name" value="Dual Incision in GG-NER"/>
</dbReference>
<dbReference type="Reactome" id="R-SPO-6782135">
    <property type="pathway name" value="Dual incision in TC-NER"/>
</dbReference>
<dbReference type="Reactome" id="R-SPO-6782210">
    <property type="pathway name" value="Gap-filling DNA repair synthesis and ligation in TC-NER"/>
</dbReference>
<dbReference type="Reactome" id="R-SPO-69091">
    <property type="pathway name" value="Polymerase switching"/>
</dbReference>
<dbReference type="PRO" id="PR:O94449"/>
<dbReference type="Proteomes" id="UP000002485">
    <property type="component" value="Chromosome I"/>
</dbReference>
<dbReference type="GO" id="GO:0000785">
    <property type="term" value="C:chromatin"/>
    <property type="evidence" value="ECO:0000305"/>
    <property type="project" value="PomBase"/>
</dbReference>
<dbReference type="GO" id="GO:0031390">
    <property type="term" value="C:Ctf18 RFC-like complex"/>
    <property type="evidence" value="ECO:0000318"/>
    <property type="project" value="GO_Central"/>
</dbReference>
<dbReference type="GO" id="GO:0005829">
    <property type="term" value="C:cytosol"/>
    <property type="evidence" value="ECO:0007005"/>
    <property type="project" value="PomBase"/>
</dbReference>
<dbReference type="GO" id="GO:0005663">
    <property type="term" value="C:DNA replication factor C complex"/>
    <property type="evidence" value="ECO:0000318"/>
    <property type="project" value="GO_Central"/>
</dbReference>
<dbReference type="GO" id="GO:0031391">
    <property type="term" value="C:Elg1 RFC-like complex"/>
    <property type="evidence" value="ECO:0000314"/>
    <property type="project" value="PomBase"/>
</dbReference>
<dbReference type="GO" id="GO:0005634">
    <property type="term" value="C:nucleus"/>
    <property type="evidence" value="ECO:0007005"/>
    <property type="project" value="PomBase"/>
</dbReference>
<dbReference type="GO" id="GO:0031389">
    <property type="term" value="C:Rad17 RFC-like complex"/>
    <property type="evidence" value="ECO:0000318"/>
    <property type="project" value="GO_Central"/>
</dbReference>
<dbReference type="GO" id="GO:0005524">
    <property type="term" value="F:ATP binding"/>
    <property type="evidence" value="ECO:0007669"/>
    <property type="project" value="UniProtKB-KW"/>
</dbReference>
<dbReference type="GO" id="GO:0016887">
    <property type="term" value="F:ATP hydrolysis activity"/>
    <property type="evidence" value="ECO:0007669"/>
    <property type="project" value="InterPro"/>
</dbReference>
<dbReference type="GO" id="GO:0003677">
    <property type="term" value="F:DNA binding"/>
    <property type="evidence" value="ECO:0007669"/>
    <property type="project" value="UniProtKB-KW"/>
</dbReference>
<dbReference type="GO" id="GO:0061860">
    <property type="term" value="F:DNA clamp unloader activity"/>
    <property type="evidence" value="ECO:0000305"/>
    <property type="project" value="PomBase"/>
</dbReference>
<dbReference type="GO" id="GO:0006281">
    <property type="term" value="P:DNA repair"/>
    <property type="evidence" value="ECO:0000318"/>
    <property type="project" value="GO_Central"/>
</dbReference>
<dbReference type="GO" id="GO:1902983">
    <property type="term" value="P:DNA strand elongation involved in mitotic DNA replication"/>
    <property type="evidence" value="ECO:0000314"/>
    <property type="project" value="PomBase"/>
</dbReference>
<dbReference type="GO" id="GO:0006261">
    <property type="term" value="P:DNA-templated DNA replication"/>
    <property type="evidence" value="ECO:0000318"/>
    <property type="project" value="GO_Central"/>
</dbReference>
<dbReference type="GO" id="GO:1903460">
    <property type="term" value="P:mitotic DNA replication leading strand elongation"/>
    <property type="evidence" value="ECO:0000266"/>
    <property type="project" value="PomBase"/>
</dbReference>
<dbReference type="GO" id="GO:0070914">
    <property type="term" value="P:UV-damage excision repair"/>
    <property type="evidence" value="ECO:0000314"/>
    <property type="project" value="PomBase"/>
</dbReference>
<dbReference type="CDD" id="cd00009">
    <property type="entry name" value="AAA"/>
    <property type="match status" value="1"/>
</dbReference>
<dbReference type="CDD" id="cd18140">
    <property type="entry name" value="HLD_clamp_RFC"/>
    <property type="match status" value="1"/>
</dbReference>
<dbReference type="FunFam" id="1.10.8.60:FF:000012">
    <property type="entry name" value="Replication factor C subunit 4"/>
    <property type="match status" value="1"/>
</dbReference>
<dbReference type="FunFam" id="1.20.272.10:FF:000015">
    <property type="entry name" value="Replication factor C subunit 4"/>
    <property type="match status" value="1"/>
</dbReference>
<dbReference type="FunFam" id="3.40.50.300:FF:000107">
    <property type="entry name" value="Replication factor C subunit 4"/>
    <property type="match status" value="1"/>
</dbReference>
<dbReference type="Gene3D" id="1.10.8.60">
    <property type="match status" value="1"/>
</dbReference>
<dbReference type="Gene3D" id="1.20.272.10">
    <property type="match status" value="1"/>
</dbReference>
<dbReference type="Gene3D" id="3.40.50.300">
    <property type="entry name" value="P-loop containing nucleotide triphosphate hydrolases"/>
    <property type="match status" value="1"/>
</dbReference>
<dbReference type="InterPro" id="IPR003593">
    <property type="entry name" value="AAA+_ATPase"/>
</dbReference>
<dbReference type="InterPro" id="IPR003959">
    <property type="entry name" value="ATPase_AAA_core"/>
</dbReference>
<dbReference type="InterPro" id="IPR008921">
    <property type="entry name" value="DNA_pol3_clamp-load_cplx_C"/>
</dbReference>
<dbReference type="InterPro" id="IPR050238">
    <property type="entry name" value="DNA_Rep/Repair_Clamp_Loader"/>
</dbReference>
<dbReference type="InterPro" id="IPR027417">
    <property type="entry name" value="P-loop_NTPase"/>
</dbReference>
<dbReference type="InterPro" id="IPR013748">
    <property type="entry name" value="Rep_factorC_C"/>
</dbReference>
<dbReference type="InterPro" id="IPR047854">
    <property type="entry name" value="RFC_lid"/>
</dbReference>
<dbReference type="NCBIfam" id="NF001679">
    <property type="entry name" value="PRK00440.1"/>
    <property type="match status" value="1"/>
</dbReference>
<dbReference type="PANTHER" id="PTHR11669">
    <property type="entry name" value="REPLICATION FACTOR C / DNA POLYMERASE III GAMMA-TAU SUBUNIT"/>
    <property type="match status" value="1"/>
</dbReference>
<dbReference type="PANTHER" id="PTHR11669:SF5">
    <property type="entry name" value="REPLICATION FACTOR C SUBUNIT 2"/>
    <property type="match status" value="1"/>
</dbReference>
<dbReference type="Pfam" id="PF00004">
    <property type="entry name" value="AAA"/>
    <property type="match status" value="1"/>
</dbReference>
<dbReference type="Pfam" id="PF08542">
    <property type="entry name" value="Rep_fac_C"/>
    <property type="match status" value="1"/>
</dbReference>
<dbReference type="SMART" id="SM00382">
    <property type="entry name" value="AAA"/>
    <property type="match status" value="1"/>
</dbReference>
<dbReference type="SUPFAM" id="SSF52540">
    <property type="entry name" value="P-loop containing nucleoside triphosphate hydrolases"/>
    <property type="match status" value="1"/>
</dbReference>
<dbReference type="SUPFAM" id="SSF48019">
    <property type="entry name" value="post-AAA+ oligomerization domain-like"/>
    <property type="match status" value="1"/>
</dbReference>
<name>RFC4_SCHPO</name>
<comment type="function">
    <text evidence="3">The elongation of primed DNA templates by DNA polymerase delta and epsilon requires the action of the accessory proteins PCNA and activator 1.</text>
</comment>
<comment type="subunit">
    <text evidence="3">Heteropentamer of subunits rfc1, rfc2, rfc3, rfc4 and rfc5 that forms a complex (RFC) with PCNA in the presence of ATP. Two other complexes exist where rfc1 can be replaced by either ctf18 or elg1 to form the ctf18-RFC or the elg1-RFC complexes respectively.</text>
</comment>
<comment type="subcellular location">
    <subcellularLocation>
        <location evidence="1">Nucleus</location>
    </subcellularLocation>
</comment>
<comment type="similarity">
    <text evidence="4">Belongs to the activator 1 small subunits family.</text>
</comment>
<gene>
    <name type="primary">rfc4</name>
    <name type="ORF">SPAC1687.03c</name>
</gene>
<protein>
    <recommendedName>
        <fullName>Replication factor C subunit 4</fullName>
        <shortName>Replication factor C4</shortName>
    </recommendedName>
</protein>
<evidence type="ECO:0000250" key="1"/>
<evidence type="ECO:0000255" key="2"/>
<evidence type="ECO:0000269" key="3">
    <source>
    </source>
</evidence>
<evidence type="ECO:0000305" key="4"/>
<reference key="1">
    <citation type="journal article" date="2002" name="Nature">
        <title>The genome sequence of Schizosaccharomyces pombe.</title>
        <authorList>
            <person name="Wood V."/>
            <person name="Gwilliam R."/>
            <person name="Rajandream M.A."/>
            <person name="Lyne M.H."/>
            <person name="Lyne R."/>
            <person name="Stewart A."/>
            <person name="Sgouros J.G."/>
            <person name="Peat N."/>
            <person name="Hayles J."/>
            <person name="Baker S.G."/>
            <person name="Basham D."/>
            <person name="Bowman S."/>
            <person name="Brooks K."/>
            <person name="Brown D."/>
            <person name="Brown S."/>
            <person name="Chillingworth T."/>
            <person name="Churcher C.M."/>
            <person name="Collins M."/>
            <person name="Connor R."/>
            <person name="Cronin A."/>
            <person name="Davis P."/>
            <person name="Feltwell T."/>
            <person name="Fraser A."/>
            <person name="Gentles S."/>
            <person name="Goble A."/>
            <person name="Hamlin N."/>
            <person name="Harris D.E."/>
            <person name="Hidalgo J."/>
            <person name="Hodgson G."/>
            <person name="Holroyd S."/>
            <person name="Hornsby T."/>
            <person name="Howarth S."/>
            <person name="Huckle E.J."/>
            <person name="Hunt S."/>
            <person name="Jagels K."/>
            <person name="James K.D."/>
            <person name="Jones L."/>
            <person name="Jones M."/>
            <person name="Leather S."/>
            <person name="McDonald S."/>
            <person name="McLean J."/>
            <person name="Mooney P."/>
            <person name="Moule S."/>
            <person name="Mungall K.L."/>
            <person name="Murphy L.D."/>
            <person name="Niblett D."/>
            <person name="Odell C."/>
            <person name="Oliver K."/>
            <person name="O'Neil S."/>
            <person name="Pearson D."/>
            <person name="Quail M.A."/>
            <person name="Rabbinowitsch E."/>
            <person name="Rutherford K.M."/>
            <person name="Rutter S."/>
            <person name="Saunders D."/>
            <person name="Seeger K."/>
            <person name="Sharp S."/>
            <person name="Skelton J."/>
            <person name="Simmonds M.N."/>
            <person name="Squares R."/>
            <person name="Squares S."/>
            <person name="Stevens K."/>
            <person name="Taylor K."/>
            <person name="Taylor R.G."/>
            <person name="Tivey A."/>
            <person name="Walsh S.V."/>
            <person name="Warren T."/>
            <person name="Whitehead S."/>
            <person name="Woodward J.R."/>
            <person name="Volckaert G."/>
            <person name="Aert R."/>
            <person name="Robben J."/>
            <person name="Grymonprez B."/>
            <person name="Weltjens I."/>
            <person name="Vanstreels E."/>
            <person name="Rieger M."/>
            <person name="Schaefer M."/>
            <person name="Mueller-Auer S."/>
            <person name="Gabel C."/>
            <person name="Fuchs M."/>
            <person name="Duesterhoeft A."/>
            <person name="Fritzc C."/>
            <person name="Holzer E."/>
            <person name="Moestl D."/>
            <person name="Hilbert H."/>
            <person name="Borzym K."/>
            <person name="Langer I."/>
            <person name="Beck A."/>
            <person name="Lehrach H."/>
            <person name="Reinhardt R."/>
            <person name="Pohl T.M."/>
            <person name="Eger P."/>
            <person name="Zimmermann W."/>
            <person name="Wedler H."/>
            <person name="Wambutt R."/>
            <person name="Purnelle B."/>
            <person name="Goffeau A."/>
            <person name="Cadieu E."/>
            <person name="Dreano S."/>
            <person name="Gloux S."/>
            <person name="Lelaure V."/>
            <person name="Mottier S."/>
            <person name="Galibert F."/>
            <person name="Aves S.J."/>
            <person name="Xiang Z."/>
            <person name="Hunt C."/>
            <person name="Moore K."/>
            <person name="Hurst S.M."/>
            <person name="Lucas M."/>
            <person name="Rochet M."/>
            <person name="Gaillardin C."/>
            <person name="Tallada V.A."/>
            <person name="Garzon A."/>
            <person name="Thode G."/>
            <person name="Daga R.R."/>
            <person name="Cruzado L."/>
            <person name="Jimenez J."/>
            <person name="Sanchez M."/>
            <person name="del Rey F."/>
            <person name="Benito J."/>
            <person name="Dominguez A."/>
            <person name="Revuelta J.L."/>
            <person name="Moreno S."/>
            <person name="Armstrong J."/>
            <person name="Forsburg S.L."/>
            <person name="Cerutti L."/>
            <person name="Lowe T."/>
            <person name="McCombie W.R."/>
            <person name="Paulsen I."/>
            <person name="Potashkin J."/>
            <person name="Shpakovski G.V."/>
            <person name="Ussery D."/>
            <person name="Barrell B.G."/>
            <person name="Nurse P."/>
        </authorList>
    </citation>
    <scope>NUCLEOTIDE SEQUENCE [LARGE SCALE GENOMIC DNA]</scope>
    <source>
        <strain>972 / ATCC 24843</strain>
    </source>
</reference>
<reference key="2">
    <citation type="journal article" date="2005" name="Nucleic Acids Res.">
        <title>Contrasting effects of Elg1-RFC and Ctf18-RFC inactivation in the absence of fully functional RFC in fission yeast.</title>
        <authorList>
            <person name="Kim J."/>
            <person name="Robertson K."/>
            <person name="Mylonas K.J.L."/>
            <person name="Gray F.C."/>
            <person name="Charapitsa I."/>
            <person name="MacNeill S.A."/>
        </authorList>
    </citation>
    <scope>PROTEIN SEQUENCE OF 14-46; 51-67; 85-96; 112-119; 122-150; 162-174; 178-186; 196-238; 267-286; 291-299 AND 333-342</scope>
    <scope>FUNCTION</scope>
    <scope>SUBUNIT</scope>
</reference>
<keyword id="KW-0067">ATP-binding</keyword>
<keyword id="KW-0131">Cell cycle</keyword>
<keyword id="KW-0903">Direct protein sequencing</keyword>
<keyword id="KW-0235">DNA replication</keyword>
<keyword id="KW-0238">DNA-binding</keyword>
<keyword id="KW-0547">Nucleotide-binding</keyword>
<keyword id="KW-0539">Nucleus</keyword>
<keyword id="KW-1185">Reference proteome</keyword>
<proteinExistence type="evidence at protein level"/>
<accession>O94449</accession>